<keyword id="KW-0687">Ribonucleoprotein</keyword>
<keyword id="KW-0689">Ribosomal protein</keyword>
<evidence type="ECO:0000255" key="1">
    <source>
        <dbReference type="HAMAP-Rule" id="MF_00402"/>
    </source>
</evidence>
<evidence type="ECO:0000305" key="2"/>
<sequence length="132" mass="14903">MNIIEQLEREEVARLAKTIPDFEPGDTLIVNVRVKEGERTRVQAYEGVCIARSGGGLNESFTVRKISYGEGVERVFPVHSPMIDSIKVARRGKVRRAKLYYLRDRRGKSARIVERTDRYKAKDTPAAAPAAE</sequence>
<accession>B1LZR8</accession>
<name>RL19_METRJ</name>
<proteinExistence type="inferred from homology"/>
<comment type="function">
    <text evidence="1">This protein is located at the 30S-50S ribosomal subunit interface and may play a role in the structure and function of the aminoacyl-tRNA binding site.</text>
</comment>
<comment type="similarity">
    <text evidence="1">Belongs to the bacterial ribosomal protein bL19 family.</text>
</comment>
<gene>
    <name evidence="1" type="primary">rplS</name>
    <name type="ordered locus">Mrad2831_0956</name>
</gene>
<dbReference type="EMBL" id="CP001001">
    <property type="protein sequence ID" value="ACB22966.1"/>
    <property type="molecule type" value="Genomic_DNA"/>
</dbReference>
<dbReference type="RefSeq" id="WP_012317959.1">
    <property type="nucleotide sequence ID" value="NC_010505.1"/>
</dbReference>
<dbReference type="SMR" id="B1LZR8"/>
<dbReference type="STRING" id="426355.Mrad2831_0956"/>
<dbReference type="GeneID" id="6136973"/>
<dbReference type="KEGG" id="mrd:Mrad2831_0956"/>
<dbReference type="eggNOG" id="COG0335">
    <property type="taxonomic scope" value="Bacteria"/>
</dbReference>
<dbReference type="HOGENOM" id="CLU_103507_2_1_5"/>
<dbReference type="OrthoDB" id="9803541at2"/>
<dbReference type="Proteomes" id="UP000006589">
    <property type="component" value="Chromosome"/>
</dbReference>
<dbReference type="GO" id="GO:0022625">
    <property type="term" value="C:cytosolic large ribosomal subunit"/>
    <property type="evidence" value="ECO:0007669"/>
    <property type="project" value="TreeGrafter"/>
</dbReference>
<dbReference type="GO" id="GO:0003735">
    <property type="term" value="F:structural constituent of ribosome"/>
    <property type="evidence" value="ECO:0007669"/>
    <property type="project" value="InterPro"/>
</dbReference>
<dbReference type="GO" id="GO:0006412">
    <property type="term" value="P:translation"/>
    <property type="evidence" value="ECO:0007669"/>
    <property type="project" value="UniProtKB-UniRule"/>
</dbReference>
<dbReference type="FunFam" id="2.30.30.790:FF:000001">
    <property type="entry name" value="50S ribosomal protein L19"/>
    <property type="match status" value="1"/>
</dbReference>
<dbReference type="Gene3D" id="2.30.30.790">
    <property type="match status" value="1"/>
</dbReference>
<dbReference type="HAMAP" id="MF_00402">
    <property type="entry name" value="Ribosomal_bL19"/>
    <property type="match status" value="1"/>
</dbReference>
<dbReference type="InterPro" id="IPR001857">
    <property type="entry name" value="Ribosomal_bL19"/>
</dbReference>
<dbReference type="InterPro" id="IPR018257">
    <property type="entry name" value="Ribosomal_bL19_CS"/>
</dbReference>
<dbReference type="InterPro" id="IPR038657">
    <property type="entry name" value="Ribosomal_bL19_sf"/>
</dbReference>
<dbReference type="InterPro" id="IPR008991">
    <property type="entry name" value="Translation_prot_SH3-like_sf"/>
</dbReference>
<dbReference type="NCBIfam" id="TIGR01024">
    <property type="entry name" value="rplS_bact"/>
    <property type="match status" value="1"/>
</dbReference>
<dbReference type="PANTHER" id="PTHR15680:SF9">
    <property type="entry name" value="LARGE RIBOSOMAL SUBUNIT PROTEIN BL19M"/>
    <property type="match status" value="1"/>
</dbReference>
<dbReference type="PANTHER" id="PTHR15680">
    <property type="entry name" value="RIBOSOMAL PROTEIN L19"/>
    <property type="match status" value="1"/>
</dbReference>
<dbReference type="Pfam" id="PF01245">
    <property type="entry name" value="Ribosomal_L19"/>
    <property type="match status" value="1"/>
</dbReference>
<dbReference type="PIRSF" id="PIRSF002191">
    <property type="entry name" value="Ribosomal_L19"/>
    <property type="match status" value="1"/>
</dbReference>
<dbReference type="PRINTS" id="PR00061">
    <property type="entry name" value="RIBOSOMALL19"/>
</dbReference>
<dbReference type="SUPFAM" id="SSF50104">
    <property type="entry name" value="Translation proteins SH3-like domain"/>
    <property type="match status" value="1"/>
</dbReference>
<dbReference type="PROSITE" id="PS01015">
    <property type="entry name" value="RIBOSOMAL_L19"/>
    <property type="match status" value="1"/>
</dbReference>
<organism>
    <name type="scientific">Methylobacterium radiotolerans (strain ATCC 27329 / DSM 1819 / JCM 2831 / NBRC 15690 / NCIMB 10815 / 0-1)</name>
    <dbReference type="NCBI Taxonomy" id="426355"/>
    <lineage>
        <taxon>Bacteria</taxon>
        <taxon>Pseudomonadati</taxon>
        <taxon>Pseudomonadota</taxon>
        <taxon>Alphaproteobacteria</taxon>
        <taxon>Hyphomicrobiales</taxon>
        <taxon>Methylobacteriaceae</taxon>
        <taxon>Methylobacterium</taxon>
    </lineage>
</organism>
<reference key="1">
    <citation type="submission" date="2008-03" db="EMBL/GenBank/DDBJ databases">
        <title>Complete sequence of chromosome of Methylobacterium radiotolerans JCM 2831.</title>
        <authorList>
            <consortium name="US DOE Joint Genome Institute"/>
            <person name="Copeland A."/>
            <person name="Lucas S."/>
            <person name="Lapidus A."/>
            <person name="Glavina del Rio T."/>
            <person name="Dalin E."/>
            <person name="Tice H."/>
            <person name="Bruce D."/>
            <person name="Goodwin L."/>
            <person name="Pitluck S."/>
            <person name="Kiss H."/>
            <person name="Brettin T."/>
            <person name="Detter J.C."/>
            <person name="Han C."/>
            <person name="Kuske C.R."/>
            <person name="Schmutz J."/>
            <person name="Larimer F."/>
            <person name="Land M."/>
            <person name="Hauser L."/>
            <person name="Kyrpides N."/>
            <person name="Mikhailova N."/>
            <person name="Marx C.J."/>
            <person name="Richardson P."/>
        </authorList>
    </citation>
    <scope>NUCLEOTIDE SEQUENCE [LARGE SCALE GENOMIC DNA]</scope>
    <source>
        <strain>ATCC 27329 / DSM 1819 / JCM 2831 / NBRC 15690 / NCIMB 10815 / 0-1</strain>
    </source>
</reference>
<protein>
    <recommendedName>
        <fullName evidence="1">Large ribosomal subunit protein bL19</fullName>
    </recommendedName>
    <alternativeName>
        <fullName evidence="2">50S ribosomal protein L19</fullName>
    </alternativeName>
</protein>
<feature type="chain" id="PRO_1000123340" description="Large ribosomal subunit protein bL19">
    <location>
        <begin position="1"/>
        <end position="132"/>
    </location>
</feature>